<evidence type="ECO:0000255" key="1">
    <source>
        <dbReference type="HAMAP-Rule" id="MF_00090"/>
    </source>
</evidence>
<dbReference type="EC" id="2.1.1.77" evidence="1"/>
<dbReference type="EMBL" id="CP000034">
    <property type="protein sequence ID" value="ABB62968.1"/>
    <property type="molecule type" value="Genomic_DNA"/>
</dbReference>
<dbReference type="RefSeq" id="WP_000254708.1">
    <property type="nucleotide sequence ID" value="NC_007606.1"/>
</dbReference>
<dbReference type="RefSeq" id="YP_404459.1">
    <property type="nucleotide sequence ID" value="NC_007606.1"/>
</dbReference>
<dbReference type="SMR" id="Q32CI7"/>
<dbReference type="STRING" id="300267.SDY_2942"/>
<dbReference type="EnsemblBacteria" id="ABB62968">
    <property type="protein sequence ID" value="ABB62968"/>
    <property type="gene ID" value="SDY_2942"/>
</dbReference>
<dbReference type="GeneID" id="93779263"/>
<dbReference type="KEGG" id="sdy:SDY_2942"/>
<dbReference type="PATRIC" id="fig|300267.13.peg.3534"/>
<dbReference type="HOGENOM" id="CLU_055432_2_0_6"/>
<dbReference type="Proteomes" id="UP000002716">
    <property type="component" value="Chromosome"/>
</dbReference>
<dbReference type="GO" id="GO:0005737">
    <property type="term" value="C:cytoplasm"/>
    <property type="evidence" value="ECO:0007669"/>
    <property type="project" value="UniProtKB-SubCell"/>
</dbReference>
<dbReference type="GO" id="GO:0004719">
    <property type="term" value="F:protein-L-isoaspartate (D-aspartate) O-methyltransferase activity"/>
    <property type="evidence" value="ECO:0007669"/>
    <property type="project" value="UniProtKB-UniRule"/>
</dbReference>
<dbReference type="GO" id="GO:0032259">
    <property type="term" value="P:methylation"/>
    <property type="evidence" value="ECO:0007669"/>
    <property type="project" value="UniProtKB-KW"/>
</dbReference>
<dbReference type="GO" id="GO:0036211">
    <property type="term" value="P:protein modification process"/>
    <property type="evidence" value="ECO:0007669"/>
    <property type="project" value="UniProtKB-UniRule"/>
</dbReference>
<dbReference type="GO" id="GO:0030091">
    <property type="term" value="P:protein repair"/>
    <property type="evidence" value="ECO:0007669"/>
    <property type="project" value="UniProtKB-UniRule"/>
</dbReference>
<dbReference type="CDD" id="cd02440">
    <property type="entry name" value="AdoMet_MTases"/>
    <property type="match status" value="1"/>
</dbReference>
<dbReference type="FunFam" id="3.40.50.150:FF:000010">
    <property type="entry name" value="Protein-L-isoaspartate O-methyltransferase"/>
    <property type="match status" value="1"/>
</dbReference>
<dbReference type="Gene3D" id="3.40.50.150">
    <property type="entry name" value="Vaccinia Virus protein VP39"/>
    <property type="match status" value="1"/>
</dbReference>
<dbReference type="HAMAP" id="MF_00090">
    <property type="entry name" value="PIMT"/>
    <property type="match status" value="1"/>
</dbReference>
<dbReference type="InterPro" id="IPR000682">
    <property type="entry name" value="PCMT"/>
</dbReference>
<dbReference type="InterPro" id="IPR029063">
    <property type="entry name" value="SAM-dependent_MTases_sf"/>
</dbReference>
<dbReference type="NCBIfam" id="TIGR00080">
    <property type="entry name" value="pimt"/>
    <property type="match status" value="1"/>
</dbReference>
<dbReference type="NCBIfam" id="NF001453">
    <property type="entry name" value="PRK00312.1"/>
    <property type="match status" value="1"/>
</dbReference>
<dbReference type="PANTHER" id="PTHR11579">
    <property type="entry name" value="PROTEIN-L-ISOASPARTATE O-METHYLTRANSFERASE"/>
    <property type="match status" value="1"/>
</dbReference>
<dbReference type="PANTHER" id="PTHR11579:SF0">
    <property type="entry name" value="PROTEIN-L-ISOASPARTATE(D-ASPARTATE) O-METHYLTRANSFERASE"/>
    <property type="match status" value="1"/>
</dbReference>
<dbReference type="Pfam" id="PF01135">
    <property type="entry name" value="PCMT"/>
    <property type="match status" value="1"/>
</dbReference>
<dbReference type="SUPFAM" id="SSF53335">
    <property type="entry name" value="S-adenosyl-L-methionine-dependent methyltransferases"/>
    <property type="match status" value="1"/>
</dbReference>
<dbReference type="PROSITE" id="PS01279">
    <property type="entry name" value="PCMT"/>
    <property type="match status" value="1"/>
</dbReference>
<feature type="chain" id="PRO_1000004826" description="Protein-L-isoaspartate O-methyltransferase">
    <location>
        <begin position="1"/>
        <end position="208"/>
    </location>
</feature>
<feature type="active site" evidence="1">
    <location>
        <position position="59"/>
    </location>
</feature>
<proteinExistence type="inferred from homology"/>
<reference key="1">
    <citation type="journal article" date="2005" name="Nucleic Acids Res.">
        <title>Genome dynamics and diversity of Shigella species, the etiologic agents of bacillary dysentery.</title>
        <authorList>
            <person name="Yang F."/>
            <person name="Yang J."/>
            <person name="Zhang X."/>
            <person name="Chen L."/>
            <person name="Jiang Y."/>
            <person name="Yan Y."/>
            <person name="Tang X."/>
            <person name="Wang J."/>
            <person name="Xiong Z."/>
            <person name="Dong J."/>
            <person name="Xue Y."/>
            <person name="Zhu Y."/>
            <person name="Xu X."/>
            <person name="Sun L."/>
            <person name="Chen S."/>
            <person name="Nie H."/>
            <person name="Peng J."/>
            <person name="Xu J."/>
            <person name="Wang Y."/>
            <person name="Yuan Z."/>
            <person name="Wen Y."/>
            <person name="Yao Z."/>
            <person name="Shen Y."/>
            <person name="Qiang B."/>
            <person name="Hou Y."/>
            <person name="Yu J."/>
            <person name="Jin Q."/>
        </authorList>
    </citation>
    <scope>NUCLEOTIDE SEQUENCE [LARGE SCALE GENOMIC DNA]</scope>
    <source>
        <strain>Sd197</strain>
    </source>
</reference>
<accession>Q32CI7</accession>
<sequence>MVSRRVQALLDQLRAQGIQDEQVLNALAAVPREKFVDEAFEQKAWDNIALPIGQGQTISQPYMVARMTELLELTPQSRVLEIGTGSGYQTAILAHLVQHVCSVERIKGLQWQARRRLKNLDLHNVSTRHGDGWQGWQARAPFDAIIVTAAPPEIPTALMTQLDEGGILVLPVGEEHQYLKRVRRRGGEFIIDTVEAVRFVPLVKGELA</sequence>
<organism>
    <name type="scientific">Shigella dysenteriae serotype 1 (strain Sd197)</name>
    <dbReference type="NCBI Taxonomy" id="300267"/>
    <lineage>
        <taxon>Bacteria</taxon>
        <taxon>Pseudomonadati</taxon>
        <taxon>Pseudomonadota</taxon>
        <taxon>Gammaproteobacteria</taxon>
        <taxon>Enterobacterales</taxon>
        <taxon>Enterobacteriaceae</taxon>
        <taxon>Shigella</taxon>
    </lineage>
</organism>
<comment type="function">
    <text evidence="1">Catalyzes the methyl esterification of L-isoaspartyl residues in peptides and proteins that result from spontaneous decomposition of normal L-aspartyl and L-asparaginyl residues. It plays a role in the repair and/or degradation of damaged proteins.</text>
</comment>
<comment type="catalytic activity">
    <reaction evidence="1">
        <text>[protein]-L-isoaspartate + S-adenosyl-L-methionine = [protein]-L-isoaspartate alpha-methyl ester + S-adenosyl-L-homocysteine</text>
        <dbReference type="Rhea" id="RHEA:12705"/>
        <dbReference type="Rhea" id="RHEA-COMP:12143"/>
        <dbReference type="Rhea" id="RHEA-COMP:12144"/>
        <dbReference type="ChEBI" id="CHEBI:57856"/>
        <dbReference type="ChEBI" id="CHEBI:59789"/>
        <dbReference type="ChEBI" id="CHEBI:90596"/>
        <dbReference type="ChEBI" id="CHEBI:90598"/>
        <dbReference type="EC" id="2.1.1.77"/>
    </reaction>
</comment>
<comment type="subcellular location">
    <subcellularLocation>
        <location evidence="1">Cytoplasm</location>
    </subcellularLocation>
</comment>
<comment type="similarity">
    <text evidence="1">Belongs to the methyltransferase superfamily. L-isoaspartyl/D-aspartyl protein methyltransferase family.</text>
</comment>
<protein>
    <recommendedName>
        <fullName evidence="1">Protein-L-isoaspartate O-methyltransferase</fullName>
        <ecNumber evidence="1">2.1.1.77</ecNumber>
    </recommendedName>
    <alternativeName>
        <fullName evidence="1">L-isoaspartyl protein carboxyl methyltransferase</fullName>
    </alternativeName>
    <alternativeName>
        <fullName evidence="1">Protein L-isoaspartyl methyltransferase</fullName>
    </alternativeName>
    <alternativeName>
        <fullName evidence="1">Protein-beta-aspartate methyltransferase</fullName>
        <shortName evidence="1">PIMT</shortName>
    </alternativeName>
</protein>
<keyword id="KW-0963">Cytoplasm</keyword>
<keyword id="KW-0489">Methyltransferase</keyword>
<keyword id="KW-1185">Reference proteome</keyword>
<keyword id="KW-0949">S-adenosyl-L-methionine</keyword>
<keyword id="KW-0808">Transferase</keyword>
<gene>
    <name evidence="1" type="primary">pcm</name>
    <name type="ordered locus">SDY_2942</name>
</gene>
<name>PIMT_SHIDS</name>